<gene>
    <name type="primary">DCN</name>
</gene>
<organism>
    <name type="scientific">Equus caballus</name>
    <name type="common">Horse</name>
    <dbReference type="NCBI Taxonomy" id="9796"/>
    <lineage>
        <taxon>Eukaryota</taxon>
        <taxon>Metazoa</taxon>
        <taxon>Chordata</taxon>
        <taxon>Craniata</taxon>
        <taxon>Vertebrata</taxon>
        <taxon>Euteleostomi</taxon>
        <taxon>Mammalia</taxon>
        <taxon>Eutheria</taxon>
        <taxon>Laurasiatheria</taxon>
        <taxon>Perissodactyla</taxon>
        <taxon>Equidae</taxon>
        <taxon>Equus</taxon>
    </lineage>
</organism>
<accession>O46542</accession>
<feature type="signal peptide" evidence="3">
    <location>
        <begin position="1"/>
        <end position="16"/>
    </location>
</feature>
<feature type="propeptide" id="PRO_0000032707" evidence="3">
    <location>
        <begin position="17"/>
        <end position="30"/>
    </location>
</feature>
<feature type="chain" id="PRO_0000032708" description="Decorin">
    <location>
        <begin position="31"/>
        <end position="360"/>
    </location>
</feature>
<feature type="repeat" description="LRR 1">
    <location>
        <begin position="74"/>
        <end position="94"/>
    </location>
</feature>
<feature type="repeat" description="LRR 2">
    <location>
        <begin position="95"/>
        <end position="118"/>
    </location>
</feature>
<feature type="repeat" description="LRR 3">
    <location>
        <begin position="119"/>
        <end position="142"/>
    </location>
</feature>
<feature type="repeat" description="LRR 4">
    <location>
        <begin position="143"/>
        <end position="163"/>
    </location>
</feature>
<feature type="repeat" description="LRR 5">
    <location>
        <begin position="164"/>
        <end position="187"/>
    </location>
</feature>
<feature type="repeat" description="LRR 6">
    <location>
        <begin position="188"/>
        <end position="213"/>
    </location>
</feature>
<feature type="repeat" description="LRR 7">
    <location>
        <begin position="214"/>
        <end position="234"/>
    </location>
</feature>
<feature type="repeat" description="LRR 8">
    <location>
        <begin position="235"/>
        <end position="258"/>
    </location>
</feature>
<feature type="repeat" description="LRR 9">
    <location>
        <begin position="259"/>
        <end position="282"/>
    </location>
</feature>
<feature type="repeat" description="LRR 10">
    <location>
        <begin position="283"/>
        <end position="305"/>
    </location>
</feature>
<feature type="repeat" description="LRR 11">
    <location>
        <begin position="306"/>
        <end position="335"/>
    </location>
</feature>
<feature type="repeat" description="LRR 12">
    <location>
        <begin position="336"/>
        <end position="360"/>
    </location>
</feature>
<feature type="glycosylation site" description="O-linked (Xyl...) (glycosaminoglycan) serine" evidence="2">
    <location>
        <position position="34"/>
    </location>
</feature>
<feature type="glycosylation site" description="N-linked (GlcNAc...) asparagine" evidence="4">
    <location>
        <position position="212"/>
    </location>
</feature>
<feature type="glycosylation site" description="N-linked (GlcNAc...) asparagine" evidence="4">
    <location>
        <position position="263"/>
    </location>
</feature>
<feature type="glycosylation site" description="N-linked (GlcNAc...) asparagine" evidence="4">
    <location>
        <position position="304"/>
    </location>
</feature>
<feature type="disulfide bond" evidence="1">
    <location>
        <begin position="55"/>
        <end position="61"/>
    </location>
</feature>
<feature type="disulfide bond" evidence="1">
    <location>
        <begin position="59"/>
        <end position="68"/>
    </location>
</feature>
<feature type="disulfide bond" evidence="1">
    <location>
        <begin position="314"/>
        <end position="347"/>
    </location>
</feature>
<proteinExistence type="evidence at transcript level"/>
<dbReference type="EMBL" id="AF038127">
    <property type="protein sequence ID" value="AAB92652.1"/>
    <property type="molecule type" value="mRNA"/>
</dbReference>
<dbReference type="RefSeq" id="NP_001075394.1">
    <property type="nucleotide sequence ID" value="NM_001081925.2"/>
</dbReference>
<dbReference type="RefSeq" id="XP_005606524.1">
    <property type="nucleotide sequence ID" value="XM_005606467.4"/>
</dbReference>
<dbReference type="SMR" id="O46542"/>
<dbReference type="FunCoup" id="O46542">
    <property type="interactions" value="346"/>
</dbReference>
<dbReference type="STRING" id="9796.ENSECAP00000017861"/>
<dbReference type="GlyCosmos" id="O46542">
    <property type="glycosylation" value="4 sites, No reported glycans"/>
</dbReference>
<dbReference type="PaxDb" id="9796-ENSECAP00000017861"/>
<dbReference type="PeptideAtlas" id="O46542"/>
<dbReference type="Ensembl" id="ENSECAT00000021671.3">
    <property type="protein sequence ID" value="ENSECAP00000017861.1"/>
    <property type="gene ID" value="ENSECAG00000020413.4"/>
</dbReference>
<dbReference type="GeneID" id="100034120"/>
<dbReference type="KEGG" id="ecb:100034120"/>
<dbReference type="CTD" id="1634"/>
<dbReference type="VGNC" id="VGNC:17046">
    <property type="gene designation" value="DCN"/>
</dbReference>
<dbReference type="GeneTree" id="ENSGT00940000158382"/>
<dbReference type="HOGENOM" id="CLU_000288_186_0_1"/>
<dbReference type="InParanoid" id="O46542"/>
<dbReference type="OMA" id="FRCIYER"/>
<dbReference type="OrthoDB" id="1111193at2759"/>
<dbReference type="TreeFam" id="TF334562"/>
<dbReference type="Proteomes" id="UP000002281">
    <property type="component" value="Chromosome 28"/>
</dbReference>
<dbReference type="Bgee" id="ENSECAG00000020413">
    <property type="expression patterns" value="Expressed in articular cartilage of joint and 20 other cell types or tissues"/>
</dbReference>
<dbReference type="ExpressionAtlas" id="O46542">
    <property type="expression patterns" value="baseline"/>
</dbReference>
<dbReference type="GO" id="GO:0005615">
    <property type="term" value="C:extracellular space"/>
    <property type="evidence" value="ECO:0000318"/>
    <property type="project" value="GO_Central"/>
</dbReference>
<dbReference type="GO" id="GO:0050840">
    <property type="term" value="F:extracellular matrix binding"/>
    <property type="evidence" value="ECO:0007669"/>
    <property type="project" value="Ensembl"/>
</dbReference>
<dbReference type="GO" id="GO:0005539">
    <property type="term" value="F:glycosaminoglycan binding"/>
    <property type="evidence" value="ECO:0007669"/>
    <property type="project" value="Ensembl"/>
</dbReference>
<dbReference type="GO" id="GO:0016525">
    <property type="term" value="P:negative regulation of angiogenesis"/>
    <property type="evidence" value="ECO:0007669"/>
    <property type="project" value="Ensembl"/>
</dbReference>
<dbReference type="GO" id="GO:0010596">
    <property type="term" value="P:negative regulation of endothelial cell migration"/>
    <property type="evidence" value="ECO:0007669"/>
    <property type="project" value="Ensembl"/>
</dbReference>
<dbReference type="GO" id="GO:1900747">
    <property type="term" value="P:negative regulation of vascular endothelial growth factor signaling pathway"/>
    <property type="evidence" value="ECO:0007669"/>
    <property type="project" value="Ensembl"/>
</dbReference>
<dbReference type="GO" id="GO:0016239">
    <property type="term" value="P:positive regulation of macroautophagy"/>
    <property type="evidence" value="ECO:0007669"/>
    <property type="project" value="Ensembl"/>
</dbReference>
<dbReference type="GO" id="GO:0051901">
    <property type="term" value="P:positive regulation of mitochondrial depolarization"/>
    <property type="evidence" value="ECO:0007669"/>
    <property type="project" value="Ensembl"/>
</dbReference>
<dbReference type="GO" id="GO:0090141">
    <property type="term" value="P:positive regulation of mitochondrial fission"/>
    <property type="evidence" value="ECO:0007669"/>
    <property type="project" value="Ensembl"/>
</dbReference>
<dbReference type="GO" id="GO:0051897">
    <property type="term" value="P:positive regulation of phosphatidylinositol 3-kinase/protein kinase B signal transduction"/>
    <property type="evidence" value="ECO:0007669"/>
    <property type="project" value="Ensembl"/>
</dbReference>
<dbReference type="GO" id="GO:0045944">
    <property type="term" value="P:positive regulation of transcription by RNA polymerase II"/>
    <property type="evidence" value="ECO:0007669"/>
    <property type="project" value="Ensembl"/>
</dbReference>
<dbReference type="FunFam" id="3.80.10.10:FF:000038">
    <property type="entry name" value="Biglycan"/>
    <property type="match status" value="1"/>
</dbReference>
<dbReference type="Gene3D" id="3.80.10.10">
    <property type="entry name" value="Ribonuclease Inhibitor"/>
    <property type="match status" value="1"/>
</dbReference>
<dbReference type="InterPro" id="IPR001611">
    <property type="entry name" value="Leu-rich_rpt"/>
</dbReference>
<dbReference type="InterPro" id="IPR003591">
    <property type="entry name" value="Leu-rich_rpt_typical-subtyp"/>
</dbReference>
<dbReference type="InterPro" id="IPR032675">
    <property type="entry name" value="LRR_dom_sf"/>
</dbReference>
<dbReference type="InterPro" id="IPR000372">
    <property type="entry name" value="LRRNT"/>
</dbReference>
<dbReference type="InterPro" id="IPR050333">
    <property type="entry name" value="SLRP"/>
</dbReference>
<dbReference type="InterPro" id="IPR016352">
    <property type="entry name" value="SLRP_I_decor/aspor/byglycan"/>
</dbReference>
<dbReference type="PANTHER" id="PTHR45712">
    <property type="entry name" value="AGAP008170-PA"/>
    <property type="match status" value="1"/>
</dbReference>
<dbReference type="PANTHER" id="PTHR45712:SF14">
    <property type="entry name" value="DECORIN"/>
    <property type="match status" value="1"/>
</dbReference>
<dbReference type="Pfam" id="PF13855">
    <property type="entry name" value="LRR_8"/>
    <property type="match status" value="3"/>
</dbReference>
<dbReference type="Pfam" id="PF01462">
    <property type="entry name" value="LRRNT"/>
    <property type="match status" value="1"/>
</dbReference>
<dbReference type="PIRSF" id="PIRSF002490">
    <property type="entry name" value="SLRP_I"/>
    <property type="match status" value="1"/>
</dbReference>
<dbReference type="SMART" id="SM00364">
    <property type="entry name" value="LRR_BAC"/>
    <property type="match status" value="4"/>
</dbReference>
<dbReference type="SMART" id="SM00369">
    <property type="entry name" value="LRR_TYP"/>
    <property type="match status" value="7"/>
</dbReference>
<dbReference type="SMART" id="SM00013">
    <property type="entry name" value="LRRNT"/>
    <property type="match status" value="1"/>
</dbReference>
<dbReference type="SUPFAM" id="SSF52058">
    <property type="entry name" value="L domain-like"/>
    <property type="match status" value="1"/>
</dbReference>
<dbReference type="PROSITE" id="PS51450">
    <property type="entry name" value="LRR"/>
    <property type="match status" value="8"/>
</dbReference>
<comment type="function">
    <text evidence="1">May affect the rate of fibrils formation.</text>
</comment>
<comment type="subunit">
    <text evidence="1">Binds to type I and type II collagen, fibronectin and TGF-beta. Forms a ternary complex with MFAP2 and ELN. Interacts with DPT (By similarity).</text>
</comment>
<comment type="subcellular location">
    <subcellularLocation>
        <location evidence="1">Secreted</location>
        <location evidence="1">Extracellular space</location>
        <location evidence="1">Extracellular matrix</location>
    </subcellularLocation>
    <subcellularLocation>
        <location evidence="2">Secreted</location>
    </subcellularLocation>
</comment>
<comment type="PTM">
    <text evidence="1">The attached glycosaminoglycan chain can be either chondroitin sulfate or dermatan sulfate depending upon the tissue of origin.</text>
</comment>
<comment type="similarity">
    <text evidence="5">Belongs to the small leucine-rich proteoglycan (SLRP) family. SLRP class I subfamily.</text>
</comment>
<name>PGS2_HORSE</name>
<reference key="1">
    <citation type="submission" date="1997-12" db="EMBL/GenBank/DDBJ databases">
        <title>Effects of interleukin-1 beta and tumor necrosis factor-alpha on the expression of matrix related genes in cultured equine articular chondrocytes.</title>
        <authorList>
            <person name="Richardson D.W."/>
            <person name="Dodge G.R."/>
        </authorList>
    </citation>
    <scope>NUCLEOTIDE SEQUENCE [MRNA]</scope>
</reference>
<protein>
    <recommendedName>
        <fullName>Decorin</fullName>
    </recommendedName>
    <alternativeName>
        <fullName>Bone proteoglycan II</fullName>
    </alternativeName>
    <alternativeName>
        <fullName>Dermatan sulfate proteoglycan II</fullName>
        <shortName>DS-PGII</shortName>
    </alternativeName>
    <alternativeName>
        <fullName>PG-S2</fullName>
    </alternativeName>
</protein>
<keyword id="KW-1015">Disulfide bond</keyword>
<keyword id="KW-0272">Extracellular matrix</keyword>
<keyword id="KW-0325">Glycoprotein</keyword>
<keyword id="KW-0433">Leucine-rich repeat</keyword>
<keyword id="KW-0654">Proteoglycan</keyword>
<keyword id="KW-1185">Reference proteome</keyword>
<keyword id="KW-0677">Repeat</keyword>
<keyword id="KW-0964">Secreted</keyword>
<keyword id="KW-0732">Signal</keyword>
<sequence>MKATIIFLLLAQVSWAGPFQQRGLFDFMLEDEASGIGPEDRIHEVLDLEPLGPVCPFRCQCHLRVVQCSDLGLDKVPKDLPPDTTLLDLQNNKITEIKDGDFKNLKNLHALILVNNKISKISPGAFTPLVKLERLYLSKNHLKELPEKMPKTLQELRVHENEITKVRKAVFNGLNQMIVVELGTNPLKSSGIENGAFQGMKKLSYIRIADTNITTIPPGLPPSLTELHLDGNKITKVDAASLRGLNNLAKLGLSFNSISAVDNGSLANTPHLRELHLDNNKLIKVPGGLADHKYIQVVYLHNNNISAVGSNDFCPPGYNTKKASYSGVSLFSNPVQYWEIQPSTFRCVYVRSAIQLGNYK</sequence>
<evidence type="ECO:0000250" key="1"/>
<evidence type="ECO:0000250" key="2">
    <source>
        <dbReference type="UniProtKB" id="P07585"/>
    </source>
</evidence>
<evidence type="ECO:0000250" key="3">
    <source>
        <dbReference type="UniProtKB" id="Q01129"/>
    </source>
</evidence>
<evidence type="ECO:0000255" key="4"/>
<evidence type="ECO:0000305" key="5"/>